<comment type="function">
    <text>May contribute to the structure and reorganization of filopodia and pseudopodia accompanying cell movements.</text>
</comment>
<comment type="subunit">
    <text>Monomer.</text>
</comment>
<accession>P24005</accession>
<accession>Q54XA5</accession>
<reference key="1">
    <citation type="journal article" date="1991" name="J. Biol. Chem.">
        <title>Isolation and sequencing of cDNA clones encoding the Dictyostelium discoideum 30,000-dalton actin-bundling protein.</title>
        <authorList>
            <person name="Fechheimer M."/>
            <person name="Murdock D."/>
            <person name="Carney M."/>
            <person name="Glover C.V.C."/>
        </authorList>
    </citation>
    <scope>NUCLEOTIDE SEQUENCE [MRNA]</scope>
    <scope>PROTEIN SEQUENCE OF 7-22 AND 225-237</scope>
</reference>
<reference key="2">
    <citation type="journal article" date="1996" name="J. Cell Biol.">
        <title>Dictyostelium discoideum cells lacking the 34,000-dalton actin-binding protein can grow, locomote, and develop, but exhibit defects in regulation of cell structure and movement: a case of partial redundancy.</title>
        <authorList>
            <person name="Rivero F."/>
            <person name="Furukawa R."/>
            <person name="Noegel A.A."/>
            <person name="Fechheimer M."/>
        </authorList>
    </citation>
    <scope>NUCLEOTIDE SEQUENCE [GENOMIC DNA]</scope>
    <source>
        <strain>AX3</strain>
    </source>
</reference>
<reference key="3">
    <citation type="journal article" date="2005" name="Nature">
        <title>The genome of the social amoeba Dictyostelium discoideum.</title>
        <authorList>
            <person name="Eichinger L."/>
            <person name="Pachebat J.A."/>
            <person name="Gloeckner G."/>
            <person name="Rajandream M.A."/>
            <person name="Sucgang R."/>
            <person name="Berriman M."/>
            <person name="Song J."/>
            <person name="Olsen R."/>
            <person name="Szafranski K."/>
            <person name="Xu Q."/>
            <person name="Tunggal B."/>
            <person name="Kummerfeld S."/>
            <person name="Madera M."/>
            <person name="Konfortov B.A."/>
            <person name="Rivero F."/>
            <person name="Bankier A.T."/>
            <person name="Lehmann R."/>
            <person name="Hamlin N."/>
            <person name="Davies R."/>
            <person name="Gaudet P."/>
            <person name="Fey P."/>
            <person name="Pilcher K."/>
            <person name="Chen G."/>
            <person name="Saunders D."/>
            <person name="Sodergren E.J."/>
            <person name="Davis P."/>
            <person name="Kerhornou A."/>
            <person name="Nie X."/>
            <person name="Hall N."/>
            <person name="Anjard C."/>
            <person name="Hemphill L."/>
            <person name="Bason N."/>
            <person name="Farbrother P."/>
            <person name="Desany B."/>
            <person name="Just E."/>
            <person name="Morio T."/>
            <person name="Rost R."/>
            <person name="Churcher C.M."/>
            <person name="Cooper J."/>
            <person name="Haydock S."/>
            <person name="van Driessche N."/>
            <person name="Cronin A."/>
            <person name="Goodhead I."/>
            <person name="Muzny D.M."/>
            <person name="Mourier T."/>
            <person name="Pain A."/>
            <person name="Lu M."/>
            <person name="Harper D."/>
            <person name="Lindsay R."/>
            <person name="Hauser H."/>
            <person name="James K.D."/>
            <person name="Quiles M."/>
            <person name="Madan Babu M."/>
            <person name="Saito T."/>
            <person name="Buchrieser C."/>
            <person name="Wardroper A."/>
            <person name="Felder M."/>
            <person name="Thangavelu M."/>
            <person name="Johnson D."/>
            <person name="Knights A."/>
            <person name="Loulseged H."/>
            <person name="Mungall K.L."/>
            <person name="Oliver K."/>
            <person name="Price C."/>
            <person name="Quail M.A."/>
            <person name="Urushihara H."/>
            <person name="Hernandez J."/>
            <person name="Rabbinowitsch E."/>
            <person name="Steffen D."/>
            <person name="Sanders M."/>
            <person name="Ma J."/>
            <person name="Kohara Y."/>
            <person name="Sharp S."/>
            <person name="Simmonds M.N."/>
            <person name="Spiegler S."/>
            <person name="Tivey A."/>
            <person name="Sugano S."/>
            <person name="White B."/>
            <person name="Walker D."/>
            <person name="Woodward J.R."/>
            <person name="Winckler T."/>
            <person name="Tanaka Y."/>
            <person name="Shaulsky G."/>
            <person name="Schleicher M."/>
            <person name="Weinstock G.M."/>
            <person name="Rosenthal A."/>
            <person name="Cox E.C."/>
            <person name="Chisholm R.L."/>
            <person name="Gibbs R.A."/>
            <person name="Loomis W.F."/>
            <person name="Platzer M."/>
            <person name="Kay R.R."/>
            <person name="Williams J.G."/>
            <person name="Dear P.H."/>
            <person name="Noegel A.A."/>
            <person name="Barrell B.G."/>
            <person name="Kuspa A."/>
        </authorList>
    </citation>
    <scope>NUCLEOTIDE SEQUENCE [LARGE SCALE GENOMIC DNA]</scope>
    <source>
        <strain>AX4</strain>
    </source>
</reference>
<reference key="4">
    <citation type="journal article" date="2006" name="Eur. J. Cell Biol.">
        <title>Identification and isolation of Dictyostelium microtubule-associated protein interactors by tandem affinity purification.</title>
        <authorList>
            <person name="Koch K.V."/>
            <person name="Reinders Y."/>
            <person name="Ho T.-H."/>
            <person name="Sickmann A."/>
            <person name="Graef R."/>
        </authorList>
    </citation>
    <scope>IDENTIFICATION BY MASS SPECTROMETRY [LARGE SCALE ANALYSIS]</scope>
    <source>
        <strain>AX2</strain>
    </source>
</reference>
<dbReference type="EMBL" id="M58022">
    <property type="protein sequence ID" value="AAA33144.1"/>
    <property type="molecule type" value="mRNA"/>
</dbReference>
<dbReference type="EMBL" id="Z50156">
    <property type="protein sequence ID" value="CAA90518.1"/>
    <property type="molecule type" value="Genomic_DNA"/>
</dbReference>
<dbReference type="EMBL" id="U32112">
    <property type="protein sequence ID" value="AAB48216.1"/>
    <property type="molecule type" value="Genomic_DNA"/>
</dbReference>
<dbReference type="EMBL" id="AAFI02000027">
    <property type="protein sequence ID" value="EAL67879.1"/>
    <property type="molecule type" value="Genomic_DNA"/>
</dbReference>
<dbReference type="PIR" id="A23750">
    <property type="entry name" value="A23750"/>
</dbReference>
<dbReference type="RefSeq" id="XP_641862.1">
    <property type="nucleotide sequence ID" value="XM_636770.1"/>
</dbReference>
<dbReference type="PDB" id="4X3N">
    <property type="method" value="X-ray"/>
    <property type="resolution" value="1.89 A"/>
    <property type="chains" value="A/B/C=1-295"/>
</dbReference>
<dbReference type="PDBsum" id="4X3N"/>
<dbReference type="SMR" id="P24005"/>
<dbReference type="STRING" id="44689.P24005"/>
<dbReference type="PaxDb" id="44689-DDB0214810"/>
<dbReference type="EnsemblProtists" id="EAL67879">
    <property type="protein sequence ID" value="EAL67879"/>
    <property type="gene ID" value="DDB_G0279081"/>
</dbReference>
<dbReference type="GeneID" id="8621868"/>
<dbReference type="KEGG" id="ddi:DDB_G0279081"/>
<dbReference type="dictyBase" id="DDB_G0279081">
    <property type="gene designation" value="abpB"/>
</dbReference>
<dbReference type="VEuPathDB" id="AmoebaDB:DDB_G0279081"/>
<dbReference type="eggNOG" id="ENOG502S8KW">
    <property type="taxonomic scope" value="Eukaryota"/>
</dbReference>
<dbReference type="HOGENOM" id="CLU_931956_0_0_1"/>
<dbReference type="InParanoid" id="P24005"/>
<dbReference type="OMA" id="KVDVNFD"/>
<dbReference type="EvolutionaryTrace" id="P24005"/>
<dbReference type="PRO" id="PR:P24005"/>
<dbReference type="Proteomes" id="UP000002195">
    <property type="component" value="Chromosome 3"/>
</dbReference>
<dbReference type="GO" id="GO:0030863">
    <property type="term" value="C:cortical cytoskeleton"/>
    <property type="evidence" value="ECO:0000314"/>
    <property type="project" value="dictyBase"/>
</dbReference>
<dbReference type="GO" id="GO:0005737">
    <property type="term" value="C:cytoplasm"/>
    <property type="evidence" value="ECO:0000314"/>
    <property type="project" value="dictyBase"/>
</dbReference>
<dbReference type="GO" id="GO:0031941">
    <property type="term" value="C:filamentous actin"/>
    <property type="evidence" value="ECO:0000314"/>
    <property type="project" value="dictyBase"/>
</dbReference>
<dbReference type="GO" id="GO:0030175">
    <property type="term" value="C:filopodium"/>
    <property type="evidence" value="ECO:0000314"/>
    <property type="project" value="dictyBase"/>
</dbReference>
<dbReference type="GO" id="GO:0061836">
    <property type="term" value="C:intranuclear rod"/>
    <property type="evidence" value="ECO:0000314"/>
    <property type="project" value="dictyBase"/>
</dbReference>
<dbReference type="GO" id="GO:0045335">
    <property type="term" value="C:phagocytic vesicle"/>
    <property type="evidence" value="ECO:0007005"/>
    <property type="project" value="dictyBase"/>
</dbReference>
<dbReference type="GO" id="GO:0031143">
    <property type="term" value="C:pseudopodium"/>
    <property type="evidence" value="ECO:0000314"/>
    <property type="project" value="dictyBase"/>
</dbReference>
<dbReference type="GO" id="GO:0051015">
    <property type="term" value="F:actin filament binding"/>
    <property type="evidence" value="ECO:0000314"/>
    <property type="project" value="dictyBase"/>
</dbReference>
<dbReference type="GO" id="GO:0005509">
    <property type="term" value="F:calcium ion binding"/>
    <property type="evidence" value="ECO:0000314"/>
    <property type="project" value="dictyBase"/>
</dbReference>
<dbReference type="GO" id="GO:0051764">
    <property type="term" value="P:actin crosslink formation"/>
    <property type="evidence" value="ECO:0000314"/>
    <property type="project" value="dictyBase"/>
</dbReference>
<dbReference type="GO" id="GO:0051017">
    <property type="term" value="P:actin filament bundle assembly"/>
    <property type="evidence" value="ECO:0000314"/>
    <property type="project" value="dictyBase"/>
</dbReference>
<dbReference type="GO" id="GO:0030046">
    <property type="term" value="P:parallel actin filament bundle assembly"/>
    <property type="evidence" value="ECO:0000314"/>
    <property type="project" value="dictyBase"/>
</dbReference>
<dbReference type="DisProt" id="DP02687"/>
<dbReference type="InterPro" id="IPR053356">
    <property type="entry name" value="Calcium-reg_actin-bundling"/>
</dbReference>
<dbReference type="InterPro" id="IPR040810">
    <property type="entry name" value="F_actin_bund_C"/>
</dbReference>
<dbReference type="PANTHER" id="PTHR37009:SF1">
    <property type="entry name" value="CALCIUM-REGULATED ACTIN-BUNDLING PROTEIN"/>
    <property type="match status" value="1"/>
</dbReference>
<dbReference type="PANTHER" id="PTHR37009">
    <property type="entry name" value="EF-HAND DOMAIN-CONTAINING PROTEIN"/>
    <property type="match status" value="1"/>
</dbReference>
<dbReference type="Pfam" id="PF18060">
    <property type="entry name" value="F_actin_bund_C"/>
    <property type="match status" value="1"/>
</dbReference>
<sequence>MAETKVAPNLTGIEQTKAGQSFTEKLSAEAMEFFCNVAKLPFSQQAVHFLNAYWAEVSKEAEFIYSVGWETIKYADMHCKGIQLVFKYDEGNDLDFDIALYFYEQLCKFCEDPKNKNYATTYPISQPQMLTALKRKQELREKVDVNFDGRVSFLEYLLYQYKDFANPADFCTRSMNHDEHPEIKKARLALEEVNKRIRAYEEEKARLTEESKIPGVKGLGATNMLAQIDSGPLKEQLNFALISAEAAVRTASKKYGGAAYSGGAGDAGAGSSAGAIWWMNRDLEEKKKRYGPQKK</sequence>
<evidence type="ECO:0007829" key="1">
    <source>
        <dbReference type="PDB" id="4X3N"/>
    </source>
</evidence>
<feature type="chain" id="PRO_0000073833" description="Calcium-regulated actin-bundling protein">
    <location>
        <begin position="1"/>
        <end position="295"/>
    </location>
</feature>
<feature type="helix" evidence="1">
    <location>
        <begin position="28"/>
        <end position="38"/>
    </location>
</feature>
<feature type="helix" evidence="1">
    <location>
        <begin position="42"/>
        <end position="57"/>
    </location>
</feature>
<feature type="helix" evidence="1">
    <location>
        <begin position="58"/>
        <end position="60"/>
    </location>
</feature>
<feature type="helix" evidence="1">
    <location>
        <begin position="61"/>
        <end position="66"/>
    </location>
</feature>
<feature type="helix" evidence="1">
    <location>
        <begin position="68"/>
        <end position="79"/>
    </location>
</feature>
<feature type="helix" evidence="1">
    <location>
        <begin position="85"/>
        <end position="87"/>
    </location>
</feature>
<feature type="strand" evidence="1">
    <location>
        <begin position="93"/>
        <end position="95"/>
    </location>
</feature>
<feature type="helix" evidence="1">
    <location>
        <begin position="96"/>
        <end position="111"/>
    </location>
</feature>
<feature type="helix" evidence="1">
    <location>
        <begin position="113"/>
        <end position="115"/>
    </location>
</feature>
<feature type="helix" evidence="1">
    <location>
        <begin position="116"/>
        <end position="121"/>
    </location>
</feature>
<feature type="helix" evidence="1">
    <location>
        <begin position="123"/>
        <end position="125"/>
    </location>
</feature>
<feature type="helix" evidence="1">
    <location>
        <begin position="132"/>
        <end position="141"/>
    </location>
</feature>
<feature type="strand" evidence="1">
    <location>
        <begin position="148"/>
        <end position="152"/>
    </location>
</feature>
<feature type="helix" evidence="1">
    <location>
        <begin position="153"/>
        <end position="160"/>
    </location>
</feature>
<feature type="turn" evidence="1">
    <location>
        <begin position="161"/>
        <end position="164"/>
    </location>
</feature>
<feature type="helix" evidence="1">
    <location>
        <begin position="167"/>
        <end position="174"/>
    </location>
</feature>
<feature type="helix" evidence="1">
    <location>
        <begin position="181"/>
        <end position="211"/>
    </location>
</feature>
<feature type="turn" evidence="1">
    <location>
        <begin position="214"/>
        <end position="217"/>
    </location>
</feature>
<feature type="helix" evidence="1">
    <location>
        <begin position="220"/>
        <end position="227"/>
    </location>
</feature>
<feature type="helix" evidence="1">
    <location>
        <begin position="228"/>
        <end position="230"/>
    </location>
</feature>
<feature type="helix" evidence="1">
    <location>
        <begin position="232"/>
        <end position="255"/>
    </location>
</feature>
<feature type="helix" evidence="1">
    <location>
        <begin position="273"/>
        <end position="290"/>
    </location>
</feature>
<organism>
    <name type="scientific">Dictyostelium discoideum</name>
    <name type="common">Social amoeba</name>
    <dbReference type="NCBI Taxonomy" id="44689"/>
    <lineage>
        <taxon>Eukaryota</taxon>
        <taxon>Amoebozoa</taxon>
        <taxon>Evosea</taxon>
        <taxon>Eumycetozoa</taxon>
        <taxon>Dictyostelia</taxon>
        <taxon>Dictyosteliales</taxon>
        <taxon>Dictyosteliaceae</taxon>
        <taxon>Dictyostelium</taxon>
    </lineage>
</organism>
<name>ACTB_DICDI</name>
<keyword id="KW-0002">3D-structure</keyword>
<keyword id="KW-0009">Actin-binding</keyword>
<keyword id="KW-0106">Calcium</keyword>
<keyword id="KW-0903">Direct protein sequencing</keyword>
<keyword id="KW-1185">Reference proteome</keyword>
<proteinExistence type="evidence at protein level"/>
<protein>
    <recommendedName>
        <fullName>Calcium-regulated actin-bundling protein</fullName>
    </recommendedName>
    <alternativeName>
        <fullName>34 kDa actin-binding protein</fullName>
    </alternativeName>
</protein>
<gene>
    <name type="primary">abpB</name>
    <name type="ORF">DDB_G0279081</name>
</gene>